<organism>
    <name type="scientific">Salmonella paratyphi A (strain AKU_12601)</name>
    <dbReference type="NCBI Taxonomy" id="554290"/>
    <lineage>
        <taxon>Bacteria</taxon>
        <taxon>Pseudomonadati</taxon>
        <taxon>Pseudomonadota</taxon>
        <taxon>Gammaproteobacteria</taxon>
        <taxon>Enterobacterales</taxon>
        <taxon>Enterobacteriaceae</taxon>
        <taxon>Salmonella</taxon>
    </lineage>
</organism>
<evidence type="ECO:0000255" key="1">
    <source>
        <dbReference type="HAMAP-Rule" id="MF_01152"/>
    </source>
</evidence>
<proteinExistence type="inferred from homology"/>
<gene>
    <name evidence="1" type="primary">dnaJ</name>
    <name type="ordered locus">SSPA0012</name>
</gene>
<accession>B5BLH9</accession>
<comment type="function">
    <text evidence="1">Participates actively in the response to hyperosmotic and heat shock by preventing the aggregation of stress-denatured proteins and by disaggregating proteins, also in an autonomous, DnaK-independent fashion. Unfolded proteins bind initially to DnaJ; upon interaction with the DnaJ-bound protein, DnaK hydrolyzes its bound ATP, resulting in the formation of a stable complex. GrpE releases ADP from DnaK; ATP binding to DnaK triggers the release of the substrate protein, thus completing the reaction cycle. Several rounds of ATP-dependent interactions between DnaJ, DnaK and GrpE are required for fully efficient folding. Also involved, together with DnaK and GrpE, in the DNA replication of plasmids through activation of initiation proteins.</text>
</comment>
<comment type="cofactor">
    <cofactor evidence="1">
        <name>Zn(2+)</name>
        <dbReference type="ChEBI" id="CHEBI:29105"/>
    </cofactor>
    <text evidence="1">Binds 2 Zn(2+) ions per monomer.</text>
</comment>
<comment type="subunit">
    <text evidence="1">Homodimer.</text>
</comment>
<comment type="subcellular location">
    <subcellularLocation>
        <location evidence="1">Cytoplasm</location>
    </subcellularLocation>
</comment>
<comment type="domain">
    <text evidence="1">The J domain is necessary and sufficient to stimulate DnaK ATPase activity. Zinc center 1 plays an important role in the autonomous, DnaK-independent chaperone activity of DnaJ. Zinc center 2 is essential for interaction with DnaK and for DnaJ activity.</text>
</comment>
<comment type="similarity">
    <text evidence="1">Belongs to the DnaJ family.</text>
</comment>
<keyword id="KW-0143">Chaperone</keyword>
<keyword id="KW-0963">Cytoplasm</keyword>
<keyword id="KW-0235">DNA replication</keyword>
<keyword id="KW-0479">Metal-binding</keyword>
<keyword id="KW-0677">Repeat</keyword>
<keyword id="KW-0346">Stress response</keyword>
<keyword id="KW-0862">Zinc</keyword>
<keyword id="KW-0863">Zinc-finger</keyword>
<dbReference type="EMBL" id="FM200053">
    <property type="protein sequence ID" value="CAR58120.1"/>
    <property type="molecule type" value="Genomic_DNA"/>
</dbReference>
<dbReference type="RefSeq" id="WP_001119012.1">
    <property type="nucleotide sequence ID" value="NC_011147.1"/>
</dbReference>
<dbReference type="SMR" id="B5BLH9"/>
<dbReference type="KEGG" id="sek:SSPA0012"/>
<dbReference type="HOGENOM" id="CLU_017633_0_7_6"/>
<dbReference type="Proteomes" id="UP000001869">
    <property type="component" value="Chromosome"/>
</dbReference>
<dbReference type="GO" id="GO:0005737">
    <property type="term" value="C:cytoplasm"/>
    <property type="evidence" value="ECO:0007669"/>
    <property type="project" value="UniProtKB-SubCell"/>
</dbReference>
<dbReference type="GO" id="GO:0005524">
    <property type="term" value="F:ATP binding"/>
    <property type="evidence" value="ECO:0007669"/>
    <property type="project" value="InterPro"/>
</dbReference>
<dbReference type="GO" id="GO:0031072">
    <property type="term" value="F:heat shock protein binding"/>
    <property type="evidence" value="ECO:0007669"/>
    <property type="project" value="InterPro"/>
</dbReference>
<dbReference type="GO" id="GO:0051082">
    <property type="term" value="F:unfolded protein binding"/>
    <property type="evidence" value="ECO:0007669"/>
    <property type="project" value="UniProtKB-UniRule"/>
</dbReference>
<dbReference type="GO" id="GO:0008270">
    <property type="term" value="F:zinc ion binding"/>
    <property type="evidence" value="ECO:0007669"/>
    <property type="project" value="UniProtKB-UniRule"/>
</dbReference>
<dbReference type="GO" id="GO:0051085">
    <property type="term" value="P:chaperone cofactor-dependent protein refolding"/>
    <property type="evidence" value="ECO:0007669"/>
    <property type="project" value="TreeGrafter"/>
</dbReference>
<dbReference type="GO" id="GO:0006260">
    <property type="term" value="P:DNA replication"/>
    <property type="evidence" value="ECO:0007669"/>
    <property type="project" value="UniProtKB-KW"/>
</dbReference>
<dbReference type="GO" id="GO:0042026">
    <property type="term" value="P:protein refolding"/>
    <property type="evidence" value="ECO:0007669"/>
    <property type="project" value="TreeGrafter"/>
</dbReference>
<dbReference type="GO" id="GO:0009408">
    <property type="term" value="P:response to heat"/>
    <property type="evidence" value="ECO:0007669"/>
    <property type="project" value="InterPro"/>
</dbReference>
<dbReference type="CDD" id="cd06257">
    <property type="entry name" value="DnaJ"/>
    <property type="match status" value="1"/>
</dbReference>
<dbReference type="CDD" id="cd10747">
    <property type="entry name" value="DnaJ_C"/>
    <property type="match status" value="1"/>
</dbReference>
<dbReference type="CDD" id="cd10719">
    <property type="entry name" value="DnaJ_zf"/>
    <property type="match status" value="1"/>
</dbReference>
<dbReference type="FunFam" id="1.10.287.110:FF:000003">
    <property type="entry name" value="Molecular chaperone DnaJ"/>
    <property type="match status" value="1"/>
</dbReference>
<dbReference type="FunFam" id="2.10.230.10:FF:000002">
    <property type="entry name" value="Molecular chaperone DnaJ"/>
    <property type="match status" value="1"/>
</dbReference>
<dbReference type="FunFam" id="2.60.260.20:FF:000004">
    <property type="entry name" value="Molecular chaperone DnaJ"/>
    <property type="match status" value="1"/>
</dbReference>
<dbReference type="Gene3D" id="1.10.287.110">
    <property type="entry name" value="DnaJ domain"/>
    <property type="match status" value="1"/>
</dbReference>
<dbReference type="Gene3D" id="2.10.230.10">
    <property type="entry name" value="Heat shock protein DnaJ, cysteine-rich domain"/>
    <property type="match status" value="1"/>
</dbReference>
<dbReference type="Gene3D" id="2.60.260.20">
    <property type="entry name" value="Urease metallochaperone UreE, N-terminal domain"/>
    <property type="match status" value="2"/>
</dbReference>
<dbReference type="HAMAP" id="MF_01152">
    <property type="entry name" value="DnaJ"/>
    <property type="match status" value="1"/>
</dbReference>
<dbReference type="InterPro" id="IPR012724">
    <property type="entry name" value="DnaJ"/>
</dbReference>
<dbReference type="InterPro" id="IPR002939">
    <property type="entry name" value="DnaJ_C"/>
</dbReference>
<dbReference type="InterPro" id="IPR001623">
    <property type="entry name" value="DnaJ_domain"/>
</dbReference>
<dbReference type="InterPro" id="IPR018253">
    <property type="entry name" value="DnaJ_domain_CS"/>
</dbReference>
<dbReference type="InterPro" id="IPR008971">
    <property type="entry name" value="HSP40/DnaJ_pept-bd"/>
</dbReference>
<dbReference type="InterPro" id="IPR001305">
    <property type="entry name" value="HSP_DnaJ_Cys-rich_dom"/>
</dbReference>
<dbReference type="InterPro" id="IPR036410">
    <property type="entry name" value="HSP_DnaJ_Cys-rich_dom_sf"/>
</dbReference>
<dbReference type="InterPro" id="IPR036869">
    <property type="entry name" value="J_dom_sf"/>
</dbReference>
<dbReference type="NCBIfam" id="TIGR02349">
    <property type="entry name" value="DnaJ_bact"/>
    <property type="match status" value="1"/>
</dbReference>
<dbReference type="NCBIfam" id="NF008035">
    <property type="entry name" value="PRK10767.1"/>
    <property type="match status" value="1"/>
</dbReference>
<dbReference type="PANTHER" id="PTHR43096:SF48">
    <property type="entry name" value="CHAPERONE PROTEIN DNAJ"/>
    <property type="match status" value="1"/>
</dbReference>
<dbReference type="PANTHER" id="PTHR43096">
    <property type="entry name" value="DNAJ HOMOLOG 1, MITOCHONDRIAL-RELATED"/>
    <property type="match status" value="1"/>
</dbReference>
<dbReference type="Pfam" id="PF00226">
    <property type="entry name" value="DnaJ"/>
    <property type="match status" value="1"/>
</dbReference>
<dbReference type="Pfam" id="PF01556">
    <property type="entry name" value="DnaJ_C"/>
    <property type="match status" value="1"/>
</dbReference>
<dbReference type="Pfam" id="PF00684">
    <property type="entry name" value="DnaJ_CXXCXGXG"/>
    <property type="match status" value="1"/>
</dbReference>
<dbReference type="PRINTS" id="PR00625">
    <property type="entry name" value="JDOMAIN"/>
</dbReference>
<dbReference type="SMART" id="SM00271">
    <property type="entry name" value="DnaJ"/>
    <property type="match status" value="1"/>
</dbReference>
<dbReference type="SUPFAM" id="SSF46565">
    <property type="entry name" value="Chaperone J-domain"/>
    <property type="match status" value="1"/>
</dbReference>
<dbReference type="SUPFAM" id="SSF57938">
    <property type="entry name" value="DnaJ/Hsp40 cysteine-rich domain"/>
    <property type="match status" value="1"/>
</dbReference>
<dbReference type="SUPFAM" id="SSF49493">
    <property type="entry name" value="HSP40/DnaJ peptide-binding domain"/>
    <property type="match status" value="2"/>
</dbReference>
<dbReference type="PROSITE" id="PS00636">
    <property type="entry name" value="DNAJ_1"/>
    <property type="match status" value="1"/>
</dbReference>
<dbReference type="PROSITE" id="PS50076">
    <property type="entry name" value="DNAJ_2"/>
    <property type="match status" value="1"/>
</dbReference>
<dbReference type="PROSITE" id="PS51188">
    <property type="entry name" value="ZF_CR"/>
    <property type="match status" value="1"/>
</dbReference>
<reference key="1">
    <citation type="journal article" date="2009" name="BMC Genomics">
        <title>Pseudogene accumulation in the evolutionary histories of Salmonella enterica serovars Paratyphi A and Typhi.</title>
        <authorList>
            <person name="Holt K.E."/>
            <person name="Thomson N.R."/>
            <person name="Wain J."/>
            <person name="Langridge G.C."/>
            <person name="Hasan R."/>
            <person name="Bhutta Z.A."/>
            <person name="Quail M.A."/>
            <person name="Norbertczak H."/>
            <person name="Walker D."/>
            <person name="Simmonds M."/>
            <person name="White B."/>
            <person name="Bason N."/>
            <person name="Mungall K."/>
            <person name="Dougan G."/>
            <person name="Parkhill J."/>
        </authorList>
    </citation>
    <scope>NUCLEOTIDE SEQUENCE [LARGE SCALE GENOMIC DNA]</scope>
    <source>
        <strain>AKU_12601</strain>
    </source>
</reference>
<name>DNAJ_SALPK</name>
<sequence length="375" mass="40994">MAKRDYYEILGVSKTAEEREIKKAYKRLAMKYHPDRNQGDKEAEAKFKEIKEAYEVLTDAQKRAAYDQYGHAAFEQGGMGGGFNGGADFSDIFGDVFGDIFGGGRGRQRAARGADLRYNMDLTLEEAVRGVTKEIRIPTLEECDVCHGSGAKAGTQPQTCPTCHGSGQVQMRQGFFAVQQTCPHCQGRGTLIKDPCHKCHGHGRVEKSKTLSVKIPAGVDTGDRIRLAGEGEAGEHGAPAGDLYVQVQVKQHPIFEREGNNLYCEVPINFAMAALGGEIEVPTLDGRVMLKVPSETQTGKLFRMRGKGVKSVRGGAQGDLLCRVVVETPVGLSEKQKQLLKDLQESFGGPTGEKNSPRSKSFFDGVKKFFDDLTR</sequence>
<feature type="chain" id="PRO_1000137725" description="Chaperone protein DnaJ">
    <location>
        <begin position="1"/>
        <end position="375"/>
    </location>
</feature>
<feature type="domain" description="J" evidence="1">
    <location>
        <begin position="5"/>
        <end position="70"/>
    </location>
</feature>
<feature type="repeat" description="CXXCXGXG motif">
    <location>
        <begin position="143"/>
        <end position="150"/>
    </location>
</feature>
<feature type="repeat" description="CXXCXGXG motif">
    <location>
        <begin position="160"/>
        <end position="167"/>
    </location>
</feature>
<feature type="repeat" description="CXXCXGXG motif">
    <location>
        <begin position="182"/>
        <end position="189"/>
    </location>
</feature>
<feature type="repeat" description="CXXCXGXG motif">
    <location>
        <begin position="196"/>
        <end position="203"/>
    </location>
</feature>
<feature type="zinc finger region" description="CR-type" evidence="1">
    <location>
        <begin position="130"/>
        <end position="208"/>
    </location>
</feature>
<feature type="binding site" evidence="1">
    <location>
        <position position="143"/>
    </location>
    <ligand>
        <name>Zn(2+)</name>
        <dbReference type="ChEBI" id="CHEBI:29105"/>
        <label>1</label>
    </ligand>
</feature>
<feature type="binding site" evidence="1">
    <location>
        <position position="146"/>
    </location>
    <ligand>
        <name>Zn(2+)</name>
        <dbReference type="ChEBI" id="CHEBI:29105"/>
        <label>1</label>
    </ligand>
</feature>
<feature type="binding site" evidence="1">
    <location>
        <position position="160"/>
    </location>
    <ligand>
        <name>Zn(2+)</name>
        <dbReference type="ChEBI" id="CHEBI:29105"/>
        <label>2</label>
    </ligand>
</feature>
<feature type="binding site" evidence="1">
    <location>
        <position position="163"/>
    </location>
    <ligand>
        <name>Zn(2+)</name>
        <dbReference type="ChEBI" id="CHEBI:29105"/>
        <label>2</label>
    </ligand>
</feature>
<feature type="binding site" evidence="1">
    <location>
        <position position="182"/>
    </location>
    <ligand>
        <name>Zn(2+)</name>
        <dbReference type="ChEBI" id="CHEBI:29105"/>
        <label>2</label>
    </ligand>
</feature>
<feature type="binding site" evidence="1">
    <location>
        <position position="185"/>
    </location>
    <ligand>
        <name>Zn(2+)</name>
        <dbReference type="ChEBI" id="CHEBI:29105"/>
        <label>2</label>
    </ligand>
</feature>
<feature type="binding site" evidence="1">
    <location>
        <position position="196"/>
    </location>
    <ligand>
        <name>Zn(2+)</name>
        <dbReference type="ChEBI" id="CHEBI:29105"/>
        <label>1</label>
    </ligand>
</feature>
<feature type="binding site" evidence="1">
    <location>
        <position position="199"/>
    </location>
    <ligand>
        <name>Zn(2+)</name>
        <dbReference type="ChEBI" id="CHEBI:29105"/>
        <label>1</label>
    </ligand>
</feature>
<protein>
    <recommendedName>
        <fullName evidence="1">Chaperone protein DnaJ</fullName>
    </recommendedName>
</protein>